<reference key="1">
    <citation type="journal article" date="1990" name="Nucleic Acids Res.">
        <title>Nucleotide sequence of the mitochondrial genome of Paramecium.</title>
        <authorList>
            <person name="Pritchard A.E."/>
            <person name="Seilhamer J.J."/>
            <person name="Mahalingam R."/>
            <person name="Sable C.L."/>
            <person name="Venuti S.E."/>
            <person name="Cummings D.J."/>
        </authorList>
    </citation>
    <scope>NUCLEOTIDE SEQUENCE [GENOMIC DNA]</scope>
    <source>
        <strain>Stock 51</strain>
    </source>
</reference>
<name>YM15_PARTE</name>
<comment type="subcellular location">
    <subcellularLocation>
        <location evidence="1">Mitochondrion</location>
    </subcellularLocation>
</comment>
<protein>
    <recommendedName>
        <fullName>Uncharacterized mitochondrial protein ORF15</fullName>
    </recommendedName>
</protein>
<accession>P15616</accession>
<geneLocation type="mitochondrion"/>
<sequence length="85" mass="10401">MFVSLKLPTKAALSKLFLQCKALRGFFLKEANYNFQHSWLYFIFVLNQLAYMRGNFSVIALRELKWEVKRAFDRYRYFFKKHVYT</sequence>
<keyword id="KW-0496">Mitochondrion</keyword>
<proteinExistence type="predicted"/>
<evidence type="ECO:0000305" key="1"/>
<organism>
    <name type="scientific">Paramecium tetraurelia</name>
    <dbReference type="NCBI Taxonomy" id="5888"/>
    <lineage>
        <taxon>Eukaryota</taxon>
        <taxon>Sar</taxon>
        <taxon>Alveolata</taxon>
        <taxon>Ciliophora</taxon>
        <taxon>Intramacronucleata</taxon>
        <taxon>Oligohymenophorea</taxon>
        <taxon>Peniculida</taxon>
        <taxon>Parameciidae</taxon>
        <taxon>Paramecium</taxon>
    </lineage>
</organism>
<feature type="chain" id="PRO_0000196876" description="Uncharacterized mitochondrial protein ORF15">
    <location>
        <begin position="1"/>
        <end position="85"/>
    </location>
</feature>
<dbReference type="EMBL" id="X15917">
    <property type="protein sequence ID" value="CAA34029.1"/>
    <property type="molecule type" value="Genomic_DNA"/>
</dbReference>
<dbReference type="PIR" id="S07750">
    <property type="entry name" value="S07750"/>
</dbReference>
<dbReference type="SMR" id="P15616"/>
<dbReference type="GO" id="GO:0005739">
    <property type="term" value="C:mitochondrion"/>
    <property type="evidence" value="ECO:0007669"/>
    <property type="project" value="UniProtKB-SubCell"/>
</dbReference>